<sequence length="376" mass="43330">MHFSDTHIGYRSLTLDEREQDFYDAFHEAIDIALENSVDFVIHTGDLFDTWVPGNRAIREFRNAVMKLNARNIPIFVIFGDHDRPRRNGEPAAGIFDFMGVHVLGWDAYEYAVRKFDGEDVLIGGISNMKGYMKTRLKDEYKRSENIEEGYRNRILMSHQAIDPFFVPDQCEAKMDDLPMNFSYIAMGHLHDFMERRIGPLISYAGSTEIKSENEINGYLKQGKGVNIVDISNGEVDLQRIRLKSVRPQIRVESDADNYVHEISEKLSSLRVKDNEKKPLVGLEIHGDISMETVMQDISKFDNAIFSRPKIRKDPKIPNIHTETADLREYFRAYLGDERLADLAMKIMAHSRSKDIDGIMKEIEVLYGDNRQDSPD</sequence>
<dbReference type="EC" id="3.1.-.-" evidence="1"/>
<dbReference type="EMBL" id="AL445063">
    <property type="protein sequence ID" value="CAC11305.1"/>
    <property type="molecule type" value="Genomic_DNA"/>
</dbReference>
<dbReference type="SMR" id="Q9HLR7"/>
<dbReference type="STRING" id="273075.gene:9571373"/>
<dbReference type="PaxDb" id="273075-Ta0158"/>
<dbReference type="EnsemblBacteria" id="CAC11305">
    <property type="protein sequence ID" value="CAC11305"/>
    <property type="gene ID" value="CAC11305"/>
</dbReference>
<dbReference type="KEGG" id="tac:Ta0158"/>
<dbReference type="eggNOG" id="arCOG00397">
    <property type="taxonomic scope" value="Archaea"/>
</dbReference>
<dbReference type="HOGENOM" id="CLU_026621_5_2_2"/>
<dbReference type="InParanoid" id="Q9HLR7"/>
<dbReference type="OrthoDB" id="11638at2157"/>
<dbReference type="Proteomes" id="UP000001024">
    <property type="component" value="Chromosome"/>
</dbReference>
<dbReference type="GO" id="GO:0008408">
    <property type="term" value="F:3'-5' exonuclease activity"/>
    <property type="evidence" value="ECO:0007669"/>
    <property type="project" value="UniProtKB-UniRule"/>
</dbReference>
<dbReference type="GO" id="GO:0045027">
    <property type="term" value="F:DNA end binding"/>
    <property type="evidence" value="ECO:0007669"/>
    <property type="project" value="UniProtKB-UniRule"/>
</dbReference>
<dbReference type="GO" id="GO:0004519">
    <property type="term" value="F:endonuclease activity"/>
    <property type="evidence" value="ECO:0007669"/>
    <property type="project" value="UniProtKB-UniRule"/>
</dbReference>
<dbReference type="GO" id="GO:0030145">
    <property type="term" value="F:manganese ion binding"/>
    <property type="evidence" value="ECO:0007669"/>
    <property type="project" value="UniProtKB-UniRule"/>
</dbReference>
<dbReference type="GO" id="GO:0000403">
    <property type="term" value="F:Y-form DNA binding"/>
    <property type="evidence" value="ECO:0007669"/>
    <property type="project" value="UniProtKB-UniRule"/>
</dbReference>
<dbReference type="GO" id="GO:0006302">
    <property type="term" value="P:double-strand break repair"/>
    <property type="evidence" value="ECO:0007669"/>
    <property type="project" value="UniProtKB-UniRule"/>
</dbReference>
<dbReference type="CDD" id="cd00840">
    <property type="entry name" value="MPP_Mre11_N"/>
    <property type="match status" value="1"/>
</dbReference>
<dbReference type="Gene3D" id="3.60.21.10">
    <property type="match status" value="1"/>
</dbReference>
<dbReference type="HAMAP" id="MF_02044">
    <property type="entry name" value="Mre11"/>
    <property type="match status" value="1"/>
</dbReference>
<dbReference type="InterPro" id="IPR004843">
    <property type="entry name" value="Calcineurin-like_PHP_ApaH"/>
</dbReference>
<dbReference type="InterPro" id="IPR050535">
    <property type="entry name" value="DNA_Repair-Maintenance_Comp"/>
</dbReference>
<dbReference type="InterPro" id="IPR029052">
    <property type="entry name" value="Metallo-depent_PP-like"/>
</dbReference>
<dbReference type="InterPro" id="IPR032885">
    <property type="entry name" value="Mre11_archaea-type"/>
</dbReference>
<dbReference type="InterPro" id="IPR041796">
    <property type="entry name" value="Mre11_N"/>
</dbReference>
<dbReference type="PANTHER" id="PTHR30337">
    <property type="entry name" value="COMPONENT OF ATP-DEPENDENT DSDNA EXONUCLEASE"/>
    <property type="match status" value="1"/>
</dbReference>
<dbReference type="PANTHER" id="PTHR30337:SF0">
    <property type="entry name" value="NUCLEASE SBCCD SUBUNIT D"/>
    <property type="match status" value="1"/>
</dbReference>
<dbReference type="Pfam" id="PF00149">
    <property type="entry name" value="Metallophos"/>
    <property type="match status" value="1"/>
</dbReference>
<dbReference type="SUPFAM" id="SSF56300">
    <property type="entry name" value="Metallo-dependent phosphatases"/>
    <property type="match status" value="1"/>
</dbReference>
<feature type="chain" id="PRO_0000138701" description="DNA double-strand break repair protein Mre11">
    <location>
        <begin position="1"/>
        <end position="376"/>
    </location>
</feature>
<feature type="active site" description="Proton donor" evidence="1">
    <location>
        <position position="82"/>
    </location>
</feature>
<feature type="binding site" evidence="1">
    <location>
        <position position="5"/>
    </location>
    <ligand>
        <name>Mn(2+)</name>
        <dbReference type="ChEBI" id="CHEBI:29035"/>
        <label>1</label>
    </ligand>
</feature>
<feature type="binding site" evidence="1">
    <location>
        <position position="7"/>
    </location>
    <ligand>
        <name>Mn(2+)</name>
        <dbReference type="ChEBI" id="CHEBI:29035"/>
        <label>1</label>
    </ligand>
</feature>
<feature type="binding site" evidence="1">
    <location>
        <position position="46"/>
    </location>
    <ligand>
        <name>Mn(2+)</name>
        <dbReference type="ChEBI" id="CHEBI:29035"/>
        <label>1</label>
    </ligand>
</feature>
<feature type="binding site" evidence="1">
    <location>
        <position position="46"/>
    </location>
    <ligand>
        <name>Mn(2+)</name>
        <dbReference type="ChEBI" id="CHEBI:29035"/>
        <label>2</label>
    </ligand>
</feature>
<feature type="binding site" evidence="1">
    <location>
        <position position="81"/>
    </location>
    <ligand>
        <name>Mn(2+)</name>
        <dbReference type="ChEBI" id="CHEBI:29035"/>
        <label>2</label>
    </ligand>
</feature>
<feature type="binding site" evidence="1">
    <location>
        <position position="159"/>
    </location>
    <ligand>
        <name>Mn(2+)</name>
        <dbReference type="ChEBI" id="CHEBI:29035"/>
        <label>2</label>
    </ligand>
</feature>
<feature type="binding site" evidence="1">
    <location>
        <position position="189"/>
    </location>
    <ligand>
        <name>Mn(2+)</name>
        <dbReference type="ChEBI" id="CHEBI:29035"/>
        <label>2</label>
    </ligand>
</feature>
<feature type="binding site" evidence="1">
    <location>
        <position position="191"/>
    </location>
    <ligand>
        <name>Mn(2+)</name>
        <dbReference type="ChEBI" id="CHEBI:29035"/>
        <label>1</label>
    </ligand>
</feature>
<accession>Q9HLR7</accession>
<proteinExistence type="inferred from homology"/>
<keyword id="KW-0227">DNA damage</keyword>
<keyword id="KW-0234">DNA repair</keyword>
<keyword id="KW-0255">Endonuclease</keyword>
<keyword id="KW-0269">Exonuclease</keyword>
<keyword id="KW-0378">Hydrolase</keyword>
<keyword id="KW-0464">Manganese</keyword>
<keyword id="KW-0479">Metal-binding</keyword>
<keyword id="KW-0540">Nuclease</keyword>
<keyword id="KW-1185">Reference proteome</keyword>
<reference key="1">
    <citation type="journal article" date="2000" name="Nature">
        <title>The genome sequence of the thermoacidophilic scavenger Thermoplasma acidophilum.</title>
        <authorList>
            <person name="Ruepp A."/>
            <person name="Graml W."/>
            <person name="Santos-Martinez M.-L."/>
            <person name="Koretke K.K."/>
            <person name="Volker C."/>
            <person name="Mewes H.-W."/>
            <person name="Frishman D."/>
            <person name="Stocker S."/>
            <person name="Lupas A.N."/>
            <person name="Baumeister W."/>
        </authorList>
    </citation>
    <scope>NUCLEOTIDE SEQUENCE [LARGE SCALE GENOMIC DNA]</scope>
    <source>
        <strain>ATCC 25905 / DSM 1728 / JCM 9062 / NBRC 15155 / AMRC-C165</strain>
    </source>
</reference>
<evidence type="ECO:0000255" key="1">
    <source>
        <dbReference type="HAMAP-Rule" id="MF_02044"/>
    </source>
</evidence>
<gene>
    <name evidence="1" type="primary">mre11</name>
    <name type="ordered locus">Ta0158</name>
</gene>
<protein>
    <recommendedName>
        <fullName evidence="1">DNA double-strand break repair protein Mre11</fullName>
        <ecNumber evidence="1">3.1.-.-</ecNumber>
    </recommendedName>
</protein>
<organism>
    <name type="scientific">Thermoplasma acidophilum (strain ATCC 25905 / DSM 1728 / JCM 9062 / NBRC 15155 / AMRC-C165)</name>
    <dbReference type="NCBI Taxonomy" id="273075"/>
    <lineage>
        <taxon>Archaea</taxon>
        <taxon>Methanobacteriati</taxon>
        <taxon>Thermoplasmatota</taxon>
        <taxon>Thermoplasmata</taxon>
        <taxon>Thermoplasmatales</taxon>
        <taxon>Thermoplasmataceae</taxon>
        <taxon>Thermoplasma</taxon>
    </lineage>
</organism>
<name>MRE11_THEAC</name>
<comment type="function">
    <text evidence="1">Part of the Rad50/Mre11 complex, which is involved in the early steps of DNA double-strand break (DSB) repair. The complex may facilitate opening of the processed DNA ends to aid in the recruitment of HerA and NurA. Mre11 binds to DSB ends and has both double-stranded 3'-5' exonuclease activity and single-stranded endonuclease activity.</text>
</comment>
<comment type="cofactor">
    <cofactor evidence="1">
        <name>Mn(2+)</name>
        <dbReference type="ChEBI" id="CHEBI:29035"/>
    </cofactor>
    <text evidence="1">Binds 2 manganese ions per subunit.</text>
</comment>
<comment type="activity regulation">
    <text evidence="1">Nuclease activity is regulated by Rad50.</text>
</comment>
<comment type="subunit">
    <text evidence="1">Homodimer. Forms a heterotetramer composed of two Mre11 subunits and two Rad50 subunits.</text>
</comment>
<comment type="similarity">
    <text evidence="1">Belongs to the MRE11/RAD32 family.</text>
</comment>